<protein>
    <recommendedName>
        <fullName evidence="1">1-(5-phosphoribosyl)-5-[(5-phosphoribosylamino)methylideneamino] imidazole-4-carboxamide isomerase</fullName>
        <ecNumber evidence="1">5.3.1.16</ecNumber>
    </recommendedName>
    <alternativeName>
        <fullName evidence="1">Phosphoribosylformimino-5-aminoimidazole carboxamide ribotide isomerase</fullName>
    </alternativeName>
</protein>
<keyword id="KW-0028">Amino-acid biosynthesis</keyword>
<keyword id="KW-0963">Cytoplasm</keyword>
<keyword id="KW-0368">Histidine biosynthesis</keyword>
<keyword id="KW-0413">Isomerase</keyword>
<keyword id="KW-1185">Reference proteome</keyword>
<proteinExistence type="inferred from homology"/>
<comment type="catalytic activity">
    <reaction evidence="1">
        <text>1-(5-phospho-beta-D-ribosyl)-5-[(5-phospho-beta-D-ribosylamino)methylideneamino]imidazole-4-carboxamide = 5-[(5-phospho-1-deoxy-D-ribulos-1-ylimino)methylamino]-1-(5-phospho-beta-D-ribosyl)imidazole-4-carboxamide</text>
        <dbReference type="Rhea" id="RHEA:15469"/>
        <dbReference type="ChEBI" id="CHEBI:58435"/>
        <dbReference type="ChEBI" id="CHEBI:58525"/>
        <dbReference type="EC" id="5.3.1.16"/>
    </reaction>
</comment>
<comment type="pathway">
    <text evidence="1">Amino-acid biosynthesis; L-histidine biosynthesis; L-histidine from 5-phospho-alpha-D-ribose 1-diphosphate: step 4/9.</text>
</comment>
<comment type="subcellular location">
    <subcellularLocation>
        <location evidence="1">Cytoplasm</location>
    </subcellularLocation>
</comment>
<comment type="similarity">
    <text evidence="1">Belongs to the HisA/HisF family.</text>
</comment>
<evidence type="ECO:0000255" key="1">
    <source>
        <dbReference type="HAMAP-Rule" id="MF_01014"/>
    </source>
</evidence>
<gene>
    <name evidence="1" type="primary">hisA</name>
    <name type="ordered locus">DVU_1038</name>
</gene>
<name>HIS4_NITV2</name>
<reference key="1">
    <citation type="journal article" date="2004" name="Nat. Biotechnol.">
        <title>The genome sequence of the anaerobic, sulfate-reducing bacterium Desulfovibrio vulgaris Hildenborough.</title>
        <authorList>
            <person name="Heidelberg J.F."/>
            <person name="Seshadri R."/>
            <person name="Haveman S.A."/>
            <person name="Hemme C.L."/>
            <person name="Paulsen I.T."/>
            <person name="Kolonay J.F."/>
            <person name="Eisen J.A."/>
            <person name="Ward N.L."/>
            <person name="Methe B.A."/>
            <person name="Brinkac L.M."/>
            <person name="Daugherty S.C."/>
            <person name="DeBoy R.T."/>
            <person name="Dodson R.J."/>
            <person name="Durkin A.S."/>
            <person name="Madupu R."/>
            <person name="Nelson W.C."/>
            <person name="Sullivan S.A."/>
            <person name="Fouts D.E."/>
            <person name="Haft D.H."/>
            <person name="Selengut J."/>
            <person name="Peterson J.D."/>
            <person name="Davidsen T.M."/>
            <person name="Zafar N."/>
            <person name="Zhou L."/>
            <person name="Radune D."/>
            <person name="Dimitrov G."/>
            <person name="Hance M."/>
            <person name="Tran K."/>
            <person name="Khouri H.M."/>
            <person name="Gill J."/>
            <person name="Utterback T.R."/>
            <person name="Feldblyum T.V."/>
            <person name="Wall J.D."/>
            <person name="Voordouw G."/>
            <person name="Fraser C.M."/>
        </authorList>
    </citation>
    <scope>NUCLEOTIDE SEQUENCE [LARGE SCALE GENOMIC DNA]</scope>
    <source>
        <strain>ATCC 29579 / DSM 644 / CCUG 34227 / NCIMB 8303 / VKM B-1760 / Hildenborough</strain>
    </source>
</reference>
<dbReference type="EC" id="5.3.1.16" evidence="1"/>
<dbReference type="EMBL" id="AE017285">
    <property type="protein sequence ID" value="AAS95518.1"/>
    <property type="molecule type" value="Genomic_DNA"/>
</dbReference>
<dbReference type="RefSeq" id="WP_010938337.1">
    <property type="nucleotide sequence ID" value="NC_002937.3"/>
</dbReference>
<dbReference type="RefSeq" id="YP_010259.1">
    <property type="nucleotide sequence ID" value="NC_002937.3"/>
</dbReference>
<dbReference type="SMR" id="P62353"/>
<dbReference type="STRING" id="882.DVU_1038"/>
<dbReference type="PaxDb" id="882-DVU_1038"/>
<dbReference type="EnsemblBacteria" id="AAS95518">
    <property type="protein sequence ID" value="AAS95518"/>
    <property type="gene ID" value="DVU_1038"/>
</dbReference>
<dbReference type="KEGG" id="dvu:DVU_1038"/>
<dbReference type="PATRIC" id="fig|882.5.peg.976"/>
<dbReference type="eggNOG" id="COG0106">
    <property type="taxonomic scope" value="Bacteria"/>
</dbReference>
<dbReference type="HOGENOM" id="CLU_048577_1_1_7"/>
<dbReference type="OrthoDB" id="9807749at2"/>
<dbReference type="PhylomeDB" id="P62353"/>
<dbReference type="UniPathway" id="UPA00031">
    <property type="reaction ID" value="UER00009"/>
</dbReference>
<dbReference type="Proteomes" id="UP000002194">
    <property type="component" value="Chromosome"/>
</dbReference>
<dbReference type="GO" id="GO:0005737">
    <property type="term" value="C:cytoplasm"/>
    <property type="evidence" value="ECO:0007669"/>
    <property type="project" value="UniProtKB-SubCell"/>
</dbReference>
<dbReference type="GO" id="GO:0003949">
    <property type="term" value="F:1-(5-phosphoribosyl)-5-[(5-phosphoribosylamino)methylideneamino]imidazole-4-carboxamide isomerase activity"/>
    <property type="evidence" value="ECO:0007669"/>
    <property type="project" value="UniProtKB-UniRule"/>
</dbReference>
<dbReference type="GO" id="GO:0000105">
    <property type="term" value="P:L-histidine biosynthetic process"/>
    <property type="evidence" value="ECO:0007669"/>
    <property type="project" value="UniProtKB-UniRule"/>
</dbReference>
<dbReference type="GO" id="GO:0000162">
    <property type="term" value="P:L-tryptophan biosynthetic process"/>
    <property type="evidence" value="ECO:0007669"/>
    <property type="project" value="TreeGrafter"/>
</dbReference>
<dbReference type="CDD" id="cd04732">
    <property type="entry name" value="HisA"/>
    <property type="match status" value="1"/>
</dbReference>
<dbReference type="FunFam" id="3.20.20.70:FF:000009">
    <property type="entry name" value="1-(5-phosphoribosyl)-5-[(5-phosphoribosylamino)methylideneamino] imidazole-4-carboxamide isomerase"/>
    <property type="match status" value="1"/>
</dbReference>
<dbReference type="Gene3D" id="3.20.20.70">
    <property type="entry name" value="Aldolase class I"/>
    <property type="match status" value="1"/>
</dbReference>
<dbReference type="HAMAP" id="MF_01014">
    <property type="entry name" value="HisA"/>
    <property type="match status" value="1"/>
</dbReference>
<dbReference type="InterPro" id="IPR013785">
    <property type="entry name" value="Aldolase_TIM"/>
</dbReference>
<dbReference type="InterPro" id="IPR006062">
    <property type="entry name" value="His_biosynth"/>
</dbReference>
<dbReference type="InterPro" id="IPR006063">
    <property type="entry name" value="HisA_bact_arch"/>
</dbReference>
<dbReference type="InterPro" id="IPR044524">
    <property type="entry name" value="Isoase_HisA-like"/>
</dbReference>
<dbReference type="InterPro" id="IPR023016">
    <property type="entry name" value="Isoase_HisA-like_bact"/>
</dbReference>
<dbReference type="InterPro" id="IPR011060">
    <property type="entry name" value="RibuloseP-bd_barrel"/>
</dbReference>
<dbReference type="NCBIfam" id="TIGR00007">
    <property type="entry name" value="1-(5-phosphoribosyl)-5-[(5-phosphoribosylamino)methylideneamino]imidazole-4-carboxamide isomerase"/>
    <property type="match status" value="1"/>
</dbReference>
<dbReference type="PANTHER" id="PTHR43090">
    <property type="entry name" value="1-(5-PHOSPHORIBOSYL)-5-[(5-PHOSPHORIBOSYLAMINO)METHYLIDENEAMINO] IMIDAZOLE-4-CARBOXAMIDE ISOMERASE"/>
    <property type="match status" value="1"/>
</dbReference>
<dbReference type="PANTHER" id="PTHR43090:SF2">
    <property type="entry name" value="1-(5-PHOSPHORIBOSYL)-5-[(5-PHOSPHORIBOSYLAMINO)METHYLIDENEAMINO] IMIDAZOLE-4-CARBOXAMIDE ISOMERASE"/>
    <property type="match status" value="1"/>
</dbReference>
<dbReference type="Pfam" id="PF00977">
    <property type="entry name" value="His_biosynth"/>
    <property type="match status" value="1"/>
</dbReference>
<dbReference type="SUPFAM" id="SSF51366">
    <property type="entry name" value="Ribulose-phoshate binding barrel"/>
    <property type="match status" value="1"/>
</dbReference>
<organism>
    <name type="scientific">Nitratidesulfovibrio vulgaris (strain ATCC 29579 / DSM 644 / CCUG 34227 / NCIMB 8303 / VKM B-1760 / Hildenborough)</name>
    <name type="common">Desulfovibrio vulgaris</name>
    <dbReference type="NCBI Taxonomy" id="882"/>
    <lineage>
        <taxon>Bacteria</taxon>
        <taxon>Pseudomonadati</taxon>
        <taxon>Thermodesulfobacteriota</taxon>
        <taxon>Desulfovibrionia</taxon>
        <taxon>Desulfovibrionales</taxon>
        <taxon>Desulfovibrionaceae</taxon>
        <taxon>Nitratidesulfovibrio</taxon>
    </lineage>
</organism>
<feature type="chain" id="PRO_0000142003" description="1-(5-phosphoribosyl)-5-[(5-phosphoribosylamino)methylideneamino] imidazole-4-carboxamide isomerase">
    <location>
        <begin position="1"/>
        <end position="249"/>
    </location>
</feature>
<feature type="active site" description="Proton acceptor" evidence="1">
    <location>
        <position position="8"/>
    </location>
</feature>
<feature type="active site" description="Proton donor" evidence="1">
    <location>
        <position position="129"/>
    </location>
</feature>
<accession>P62353</accession>
<sequence>MIVFPAIDLMNGVCVRLRRGRADDETVFSSDPVATARHWQEQGGRWLHVVDLDGAFSGQPVNAPLIRSICDALDIPVQLGGGIRDAATAKAYLEAGVERLIIGTIALEEPDAYAALCAEFPGRIGVSLDAEGGKLKTKGWVADSGLTVDEVLPRLLEAGTAFIIYTDIDRDGMQTGVNLPALEHLAKASTVPVIAAGGVATLEDVKALYPLSRTTNLQGAVSGRAIYEGTLDLRTAMDWIRQQEKAEAC</sequence>